<comment type="function">
    <text evidence="1">An accessory protein needed during the final step in the assembly of 30S ribosomal subunit, possibly for assembly of the head region. Essential for efficient processing of 16S rRNA. May be needed both before and after RbfA during the maturation of 16S rRNA. It has affinity for free ribosomal 30S subunits but not for 70S ribosomes.</text>
</comment>
<comment type="subunit">
    <text evidence="1">Binds ribosomal protein uS19.</text>
</comment>
<comment type="subcellular location">
    <subcellularLocation>
        <location evidence="1">Cytoplasm</location>
    </subcellularLocation>
</comment>
<comment type="domain">
    <text evidence="1">The PRC barrel domain binds ribosomal protein uS19.</text>
</comment>
<comment type="similarity">
    <text evidence="1">Belongs to the RimM family.</text>
</comment>
<sequence>MYKYLQVGKIVNTFGLKGEVKVIPLTDEVDRFSELEYVLLEDNLSTKLTIERYRVKDNIVIIKFKEISSIDEAQKLKNRYIVIERERAKKLPKDTYFICDIIGLEVYDLDGRKLGRIKDVLKTGSNDVYICDSYIGKKDILIPALKEIVKEVNIEEGYMKIKVVEGLLD</sequence>
<feature type="chain" id="PRO_1000116558" description="Ribosome maturation factor RimM">
    <location>
        <begin position="1"/>
        <end position="169"/>
    </location>
</feature>
<feature type="domain" description="PRC barrel" evidence="1">
    <location>
        <begin position="92"/>
        <end position="167"/>
    </location>
</feature>
<name>RIMM_CALBD</name>
<dbReference type="EMBL" id="CP001393">
    <property type="protein sequence ID" value="ACM60073.1"/>
    <property type="molecule type" value="Genomic_DNA"/>
</dbReference>
<dbReference type="RefSeq" id="WP_013403633.1">
    <property type="nucleotide sequence ID" value="NC_012034.1"/>
</dbReference>
<dbReference type="SMR" id="B9MQW9"/>
<dbReference type="STRING" id="521460.Athe_0970"/>
<dbReference type="GeneID" id="31772322"/>
<dbReference type="KEGG" id="ate:Athe_0970"/>
<dbReference type="eggNOG" id="COG0806">
    <property type="taxonomic scope" value="Bacteria"/>
</dbReference>
<dbReference type="HOGENOM" id="CLU_077636_3_2_9"/>
<dbReference type="Proteomes" id="UP000007723">
    <property type="component" value="Chromosome"/>
</dbReference>
<dbReference type="GO" id="GO:0005737">
    <property type="term" value="C:cytoplasm"/>
    <property type="evidence" value="ECO:0007669"/>
    <property type="project" value="UniProtKB-SubCell"/>
</dbReference>
<dbReference type="GO" id="GO:0005840">
    <property type="term" value="C:ribosome"/>
    <property type="evidence" value="ECO:0007669"/>
    <property type="project" value="InterPro"/>
</dbReference>
<dbReference type="GO" id="GO:0043022">
    <property type="term" value="F:ribosome binding"/>
    <property type="evidence" value="ECO:0007669"/>
    <property type="project" value="InterPro"/>
</dbReference>
<dbReference type="GO" id="GO:0042274">
    <property type="term" value="P:ribosomal small subunit biogenesis"/>
    <property type="evidence" value="ECO:0007669"/>
    <property type="project" value="UniProtKB-UniRule"/>
</dbReference>
<dbReference type="GO" id="GO:0006364">
    <property type="term" value="P:rRNA processing"/>
    <property type="evidence" value="ECO:0007669"/>
    <property type="project" value="UniProtKB-UniRule"/>
</dbReference>
<dbReference type="Gene3D" id="2.30.30.240">
    <property type="entry name" value="PRC-barrel domain"/>
    <property type="match status" value="1"/>
</dbReference>
<dbReference type="Gene3D" id="2.40.30.60">
    <property type="entry name" value="RimM"/>
    <property type="match status" value="1"/>
</dbReference>
<dbReference type="HAMAP" id="MF_00014">
    <property type="entry name" value="Ribosome_mat_RimM"/>
    <property type="match status" value="1"/>
</dbReference>
<dbReference type="InterPro" id="IPR027275">
    <property type="entry name" value="PRC-brl_dom"/>
</dbReference>
<dbReference type="InterPro" id="IPR011033">
    <property type="entry name" value="PRC_barrel-like_sf"/>
</dbReference>
<dbReference type="InterPro" id="IPR011961">
    <property type="entry name" value="RimM"/>
</dbReference>
<dbReference type="InterPro" id="IPR002676">
    <property type="entry name" value="RimM_N"/>
</dbReference>
<dbReference type="InterPro" id="IPR036976">
    <property type="entry name" value="RimM_N_sf"/>
</dbReference>
<dbReference type="InterPro" id="IPR009000">
    <property type="entry name" value="Transl_B-barrel_sf"/>
</dbReference>
<dbReference type="NCBIfam" id="TIGR02273">
    <property type="entry name" value="16S_RimM"/>
    <property type="match status" value="1"/>
</dbReference>
<dbReference type="PANTHER" id="PTHR33692">
    <property type="entry name" value="RIBOSOME MATURATION FACTOR RIMM"/>
    <property type="match status" value="1"/>
</dbReference>
<dbReference type="PANTHER" id="PTHR33692:SF1">
    <property type="entry name" value="RIBOSOME MATURATION FACTOR RIMM"/>
    <property type="match status" value="1"/>
</dbReference>
<dbReference type="Pfam" id="PF05239">
    <property type="entry name" value="PRC"/>
    <property type="match status" value="1"/>
</dbReference>
<dbReference type="Pfam" id="PF01782">
    <property type="entry name" value="RimM"/>
    <property type="match status" value="1"/>
</dbReference>
<dbReference type="SUPFAM" id="SSF50346">
    <property type="entry name" value="PRC-barrel domain"/>
    <property type="match status" value="1"/>
</dbReference>
<dbReference type="SUPFAM" id="SSF50447">
    <property type="entry name" value="Translation proteins"/>
    <property type="match status" value="1"/>
</dbReference>
<proteinExistence type="inferred from homology"/>
<reference key="1">
    <citation type="submission" date="2009-01" db="EMBL/GenBank/DDBJ databases">
        <title>Complete sequence of chromosome of Caldicellulosiruptor becscii DSM 6725.</title>
        <authorList>
            <person name="Lucas S."/>
            <person name="Copeland A."/>
            <person name="Lapidus A."/>
            <person name="Glavina del Rio T."/>
            <person name="Tice H."/>
            <person name="Bruce D."/>
            <person name="Goodwin L."/>
            <person name="Pitluck S."/>
            <person name="Sims D."/>
            <person name="Meincke L."/>
            <person name="Brettin T."/>
            <person name="Detter J.C."/>
            <person name="Han C."/>
            <person name="Larimer F."/>
            <person name="Land M."/>
            <person name="Hauser L."/>
            <person name="Kyrpides N."/>
            <person name="Ovchinnikova G."/>
            <person name="Kataeva I."/>
            <person name="Adams M.W.W."/>
        </authorList>
    </citation>
    <scope>NUCLEOTIDE SEQUENCE [LARGE SCALE GENOMIC DNA]</scope>
    <source>
        <strain>ATCC BAA-1888 / DSM 6725 / KCTC 15123 / Z-1320</strain>
    </source>
</reference>
<evidence type="ECO:0000255" key="1">
    <source>
        <dbReference type="HAMAP-Rule" id="MF_00014"/>
    </source>
</evidence>
<protein>
    <recommendedName>
        <fullName evidence="1">Ribosome maturation factor RimM</fullName>
    </recommendedName>
</protein>
<accession>B9MQW9</accession>
<organism>
    <name type="scientific">Caldicellulosiruptor bescii (strain ATCC BAA-1888 / DSM 6725 / KCTC 15123 / Z-1320)</name>
    <name type="common">Anaerocellum thermophilum</name>
    <dbReference type="NCBI Taxonomy" id="521460"/>
    <lineage>
        <taxon>Bacteria</taxon>
        <taxon>Bacillati</taxon>
        <taxon>Bacillota</taxon>
        <taxon>Bacillota incertae sedis</taxon>
        <taxon>Caldicellulosiruptorales</taxon>
        <taxon>Caldicellulosiruptoraceae</taxon>
        <taxon>Caldicellulosiruptor</taxon>
    </lineage>
</organism>
<keyword id="KW-0143">Chaperone</keyword>
<keyword id="KW-0963">Cytoplasm</keyword>
<keyword id="KW-0690">Ribosome biogenesis</keyword>
<keyword id="KW-0698">rRNA processing</keyword>
<gene>
    <name evidence="1" type="primary">rimM</name>
    <name type="ordered locus">Athe_0970</name>
</gene>